<evidence type="ECO:0000255" key="1">
    <source>
        <dbReference type="HAMAP-Rule" id="MF_00185"/>
    </source>
</evidence>
<reference key="1">
    <citation type="journal article" date="2005" name="Proc. Natl. Acad. Sci. U.S.A.">
        <title>Complete genome sequence of Vibrio fischeri: a symbiotic bacterium with pathogenic congeners.</title>
        <authorList>
            <person name="Ruby E.G."/>
            <person name="Urbanowski M."/>
            <person name="Campbell J."/>
            <person name="Dunn A."/>
            <person name="Faini M."/>
            <person name="Gunsalus R."/>
            <person name="Lostroh P."/>
            <person name="Lupp C."/>
            <person name="McCann J."/>
            <person name="Millikan D."/>
            <person name="Schaefer A."/>
            <person name="Stabb E."/>
            <person name="Stevens A."/>
            <person name="Visick K."/>
            <person name="Whistler C."/>
            <person name="Greenberg E.P."/>
        </authorList>
    </citation>
    <scope>NUCLEOTIDE SEQUENCE [LARGE SCALE GENOMIC DNA]</scope>
    <source>
        <strain>ATCC 700601 / ES114</strain>
    </source>
</reference>
<gene>
    <name evidence="1" type="primary">miaA</name>
    <name type="ordered locus">VF_2324</name>
</gene>
<feature type="chain" id="PRO_1000020682" description="tRNA dimethylallyltransferase">
    <location>
        <begin position="1"/>
        <end position="310"/>
    </location>
</feature>
<feature type="region of interest" description="Interaction with substrate tRNA" evidence="1">
    <location>
        <begin position="38"/>
        <end position="41"/>
    </location>
</feature>
<feature type="region of interest" description="Interaction with substrate tRNA" evidence="1">
    <location>
        <begin position="162"/>
        <end position="166"/>
    </location>
</feature>
<feature type="region of interest" description="Interaction with substrate tRNA" evidence="1">
    <location>
        <begin position="243"/>
        <end position="248"/>
    </location>
</feature>
<feature type="region of interest" description="Interaction with substrate tRNA" evidence="1">
    <location>
        <begin position="276"/>
        <end position="283"/>
    </location>
</feature>
<feature type="binding site" evidence="1">
    <location>
        <begin position="13"/>
        <end position="20"/>
    </location>
    <ligand>
        <name>ATP</name>
        <dbReference type="ChEBI" id="CHEBI:30616"/>
    </ligand>
</feature>
<feature type="binding site" evidence="1">
    <location>
        <begin position="15"/>
        <end position="20"/>
    </location>
    <ligand>
        <name>substrate</name>
    </ligand>
</feature>
<feature type="site" description="Interaction with substrate tRNA" evidence="1">
    <location>
        <position position="104"/>
    </location>
</feature>
<feature type="site" description="Interaction with substrate tRNA" evidence="1">
    <location>
        <position position="126"/>
    </location>
</feature>
<accession>Q5E2C7</accession>
<organism>
    <name type="scientific">Aliivibrio fischeri (strain ATCC 700601 / ES114)</name>
    <name type="common">Vibrio fischeri</name>
    <dbReference type="NCBI Taxonomy" id="312309"/>
    <lineage>
        <taxon>Bacteria</taxon>
        <taxon>Pseudomonadati</taxon>
        <taxon>Pseudomonadota</taxon>
        <taxon>Gammaproteobacteria</taxon>
        <taxon>Vibrionales</taxon>
        <taxon>Vibrionaceae</taxon>
        <taxon>Aliivibrio</taxon>
    </lineage>
</organism>
<protein>
    <recommendedName>
        <fullName evidence="1">tRNA dimethylallyltransferase</fullName>
        <ecNumber evidence="1">2.5.1.75</ecNumber>
    </recommendedName>
    <alternativeName>
        <fullName evidence="1">Dimethylallyl diphosphate:tRNA dimethylallyltransferase</fullName>
        <shortName evidence="1">DMAPP:tRNA dimethylallyltransferase</shortName>
        <shortName evidence="1">DMATase</shortName>
    </alternativeName>
    <alternativeName>
        <fullName evidence="1">Isopentenyl-diphosphate:tRNA isopentenyltransferase</fullName>
        <shortName evidence="1">IPP transferase</shortName>
        <shortName evidence="1">IPPT</shortName>
        <shortName evidence="1">IPTase</shortName>
    </alternativeName>
</protein>
<dbReference type="EC" id="2.5.1.75" evidence="1"/>
<dbReference type="EMBL" id="CP000020">
    <property type="protein sequence ID" value="AAW86819.1"/>
    <property type="molecule type" value="Genomic_DNA"/>
</dbReference>
<dbReference type="RefSeq" id="WP_011262726.1">
    <property type="nucleotide sequence ID" value="NC_006840.2"/>
</dbReference>
<dbReference type="RefSeq" id="YP_205707.1">
    <property type="nucleotide sequence ID" value="NC_006840.2"/>
</dbReference>
<dbReference type="SMR" id="Q5E2C7"/>
<dbReference type="STRING" id="312309.VF_2324"/>
<dbReference type="EnsemblBacteria" id="AAW86819">
    <property type="protein sequence ID" value="AAW86819"/>
    <property type="gene ID" value="VF_2324"/>
</dbReference>
<dbReference type="GeneID" id="54165040"/>
<dbReference type="KEGG" id="vfi:VF_2324"/>
<dbReference type="PATRIC" id="fig|312309.11.peg.2363"/>
<dbReference type="eggNOG" id="COG0324">
    <property type="taxonomic scope" value="Bacteria"/>
</dbReference>
<dbReference type="HOGENOM" id="CLU_032616_0_0_6"/>
<dbReference type="OrthoDB" id="9776390at2"/>
<dbReference type="Proteomes" id="UP000000537">
    <property type="component" value="Chromosome I"/>
</dbReference>
<dbReference type="GO" id="GO:0005524">
    <property type="term" value="F:ATP binding"/>
    <property type="evidence" value="ECO:0007669"/>
    <property type="project" value="UniProtKB-UniRule"/>
</dbReference>
<dbReference type="GO" id="GO:0052381">
    <property type="term" value="F:tRNA dimethylallyltransferase activity"/>
    <property type="evidence" value="ECO:0007669"/>
    <property type="project" value="UniProtKB-UniRule"/>
</dbReference>
<dbReference type="GO" id="GO:0006400">
    <property type="term" value="P:tRNA modification"/>
    <property type="evidence" value="ECO:0007669"/>
    <property type="project" value="TreeGrafter"/>
</dbReference>
<dbReference type="FunFam" id="1.10.20.140:FF:000001">
    <property type="entry name" value="tRNA dimethylallyltransferase"/>
    <property type="match status" value="1"/>
</dbReference>
<dbReference type="Gene3D" id="1.10.20.140">
    <property type="match status" value="1"/>
</dbReference>
<dbReference type="Gene3D" id="3.40.50.300">
    <property type="entry name" value="P-loop containing nucleotide triphosphate hydrolases"/>
    <property type="match status" value="1"/>
</dbReference>
<dbReference type="HAMAP" id="MF_00185">
    <property type="entry name" value="IPP_trans"/>
    <property type="match status" value="1"/>
</dbReference>
<dbReference type="InterPro" id="IPR039657">
    <property type="entry name" value="Dimethylallyltransferase"/>
</dbReference>
<dbReference type="InterPro" id="IPR018022">
    <property type="entry name" value="IPT"/>
</dbReference>
<dbReference type="InterPro" id="IPR027417">
    <property type="entry name" value="P-loop_NTPase"/>
</dbReference>
<dbReference type="NCBIfam" id="TIGR00174">
    <property type="entry name" value="miaA"/>
    <property type="match status" value="1"/>
</dbReference>
<dbReference type="PANTHER" id="PTHR11088">
    <property type="entry name" value="TRNA DIMETHYLALLYLTRANSFERASE"/>
    <property type="match status" value="1"/>
</dbReference>
<dbReference type="PANTHER" id="PTHR11088:SF60">
    <property type="entry name" value="TRNA DIMETHYLALLYLTRANSFERASE"/>
    <property type="match status" value="1"/>
</dbReference>
<dbReference type="Pfam" id="PF01715">
    <property type="entry name" value="IPPT"/>
    <property type="match status" value="1"/>
</dbReference>
<dbReference type="SUPFAM" id="SSF52540">
    <property type="entry name" value="P-loop containing nucleoside triphosphate hydrolases"/>
    <property type="match status" value="1"/>
</dbReference>
<proteinExistence type="inferred from homology"/>
<sequence length="310" mass="35150">MNKPLPKAIFLMGPTASGKTNLAIELRKRFPVELISVDSALIYKGMDIGTAKPNAEELLQAPHRLIDILDPTESYSAADFRRDALKEMDDIVAQGKIPLLVGGTMLYYKALLEGLSPLPAADADIRAQIEQEAEQFGWEAMHDQLKTIDPVSAERIHPNDPQRLSRALEVFRISGKTLTELTQIKGDALPYEVHQFAIAPKERAEIHRRIELRFANMMEEGFEAEARALYERDDLHADLPSIRCVGYRQMWDYFDGEGTLDEAVFRGICATRQLAKRQITWLRSWKELTWLDSDDIDGALELISTQLEKK</sequence>
<comment type="function">
    <text evidence="1">Catalyzes the transfer of a dimethylallyl group onto the adenine at position 37 in tRNAs that read codons beginning with uridine, leading to the formation of N6-(dimethylallyl)adenosine (i(6)A).</text>
</comment>
<comment type="catalytic activity">
    <reaction evidence="1">
        <text>adenosine(37) in tRNA + dimethylallyl diphosphate = N(6)-dimethylallyladenosine(37) in tRNA + diphosphate</text>
        <dbReference type="Rhea" id="RHEA:26482"/>
        <dbReference type="Rhea" id="RHEA-COMP:10162"/>
        <dbReference type="Rhea" id="RHEA-COMP:10375"/>
        <dbReference type="ChEBI" id="CHEBI:33019"/>
        <dbReference type="ChEBI" id="CHEBI:57623"/>
        <dbReference type="ChEBI" id="CHEBI:74411"/>
        <dbReference type="ChEBI" id="CHEBI:74415"/>
        <dbReference type="EC" id="2.5.1.75"/>
    </reaction>
</comment>
<comment type="cofactor">
    <cofactor evidence="1">
        <name>Mg(2+)</name>
        <dbReference type="ChEBI" id="CHEBI:18420"/>
    </cofactor>
</comment>
<comment type="subunit">
    <text evidence="1">Monomer.</text>
</comment>
<comment type="similarity">
    <text evidence="1">Belongs to the IPP transferase family.</text>
</comment>
<keyword id="KW-0067">ATP-binding</keyword>
<keyword id="KW-0460">Magnesium</keyword>
<keyword id="KW-0547">Nucleotide-binding</keyword>
<keyword id="KW-1185">Reference proteome</keyword>
<keyword id="KW-0808">Transferase</keyword>
<keyword id="KW-0819">tRNA processing</keyword>
<name>MIAA_ALIF1</name>